<accession>B2IVV1</accession>
<protein>
    <recommendedName>
        <fullName evidence="1">Photosystem II D2 protein</fullName>
        <shortName evidence="1">PSII D2 protein</shortName>
        <ecNumber evidence="1">1.10.3.9</ecNumber>
    </recommendedName>
    <alternativeName>
        <fullName evidence="1">Photosystem Q(A) protein</fullName>
    </alternativeName>
</protein>
<gene>
    <name evidence="1" type="primary">psbD1</name>
    <name type="ordered locus">Npun_F4553</name>
</gene>
<gene>
    <name evidence="1" type="primary">psbD2</name>
    <name type="ordered locus">Npun_R3637</name>
</gene>
<feature type="chain" id="PRO_0000359602" description="Photosystem II D2 protein">
    <location>
        <begin position="1"/>
        <end position="351"/>
    </location>
</feature>
<feature type="transmembrane region" description="Helical" evidence="1">
    <location>
        <begin position="39"/>
        <end position="59"/>
    </location>
</feature>
<feature type="transmembrane region" description="Helical" evidence="1">
    <location>
        <begin position="123"/>
        <end position="139"/>
    </location>
</feature>
<feature type="transmembrane region" description="Helical" evidence="1">
    <location>
        <begin position="151"/>
        <end position="164"/>
    </location>
</feature>
<feature type="transmembrane region" description="Helical" evidence="1">
    <location>
        <begin position="206"/>
        <end position="226"/>
    </location>
</feature>
<feature type="transmembrane region" description="Helical" evidence="1">
    <location>
        <begin position="277"/>
        <end position="293"/>
    </location>
</feature>
<feature type="binding site" description="axial binding residue" evidence="1">
    <location>
        <position position="116"/>
    </location>
    <ligand>
        <name>chlorophyll a</name>
        <dbReference type="ChEBI" id="CHEBI:58416"/>
        <label>ChlzD2</label>
    </ligand>
    <ligandPart>
        <name>Mg</name>
        <dbReference type="ChEBI" id="CHEBI:25107"/>
    </ligandPart>
</feature>
<feature type="binding site" evidence="1">
    <location>
        <position position="128"/>
    </location>
    <ligand>
        <name>pheophytin a</name>
        <dbReference type="ChEBI" id="CHEBI:136840"/>
        <label>D2</label>
    </ligand>
</feature>
<feature type="binding site" evidence="1">
    <location>
        <position position="141"/>
    </location>
    <ligand>
        <name>pheophytin a</name>
        <dbReference type="ChEBI" id="CHEBI:136840"/>
        <label>D2</label>
    </ligand>
</feature>
<feature type="binding site" description="axial binding residue" evidence="1">
    <location>
        <position position="196"/>
    </location>
    <ligand>
        <name>chlorophyll a</name>
        <dbReference type="ChEBI" id="CHEBI:58416"/>
        <label>PD2</label>
    </ligand>
    <ligandPart>
        <name>Mg</name>
        <dbReference type="ChEBI" id="CHEBI:25107"/>
    </ligandPart>
</feature>
<feature type="binding site" evidence="1">
    <location>
        <position position="213"/>
    </location>
    <ligand>
        <name>a plastoquinone</name>
        <dbReference type="ChEBI" id="CHEBI:17757"/>
        <label>Q(A)</label>
    </ligand>
</feature>
<feature type="binding site" evidence="1">
    <location>
        <position position="213"/>
    </location>
    <ligand>
        <name>Fe cation</name>
        <dbReference type="ChEBI" id="CHEBI:24875"/>
        <note>ligand shared with heterodimeric partner</note>
    </ligand>
</feature>
<feature type="binding site" evidence="1">
    <location>
        <position position="260"/>
    </location>
    <ligand>
        <name>a plastoquinone</name>
        <dbReference type="ChEBI" id="CHEBI:17757"/>
        <label>Q(A)</label>
    </ligand>
</feature>
<feature type="binding site" evidence="1">
    <location>
        <position position="267"/>
    </location>
    <ligand>
        <name>Fe cation</name>
        <dbReference type="ChEBI" id="CHEBI:24875"/>
        <note>ligand shared with heterodimeric partner</note>
    </ligand>
</feature>
<organism>
    <name type="scientific">Nostoc punctiforme (strain ATCC 29133 / PCC 73102)</name>
    <dbReference type="NCBI Taxonomy" id="63737"/>
    <lineage>
        <taxon>Bacteria</taxon>
        <taxon>Bacillati</taxon>
        <taxon>Cyanobacteriota</taxon>
        <taxon>Cyanophyceae</taxon>
        <taxon>Nostocales</taxon>
        <taxon>Nostocaceae</taxon>
        <taxon>Nostoc</taxon>
    </lineage>
</organism>
<name>PSBD_NOSP7</name>
<sequence length="351" mass="39177">MTIAVGRAPSRGWFDVLDDWLKRDRFVFVGWSGILLFPCAFLALGGWLTGTTFVTSWYTHGLASSYLEGANFLTVAVSTPADSMGHSLLLLWGPEAQGDLTRWFQLGGLWPFVALHGAFGLIGFMLRQFEIARLVGIRPYNALAFSAPIAVFVSVFLMYPLGQSSWFFAPSFGVAAIFRFLLFLQGFHNWTLNPFHMMGVAGVLGGALLCAIHGATVENTLFEDGDGANTFRAFNPTQSEETYSMVTANRFWSQIFGIAFSNKRWLHFFMLFVPVTGLWMSAVGIVGLALNLRAYDFVSQELRAAEDPEFETFYTKNILLNEGIRAWMAPQDQPHEQFVFPEEVLPRGNAL</sequence>
<proteinExistence type="inferred from homology"/>
<comment type="function">
    <text evidence="1">Photosystem II (PSII) is a light-driven water:plastoquinone oxidoreductase that uses light energy to abstract electrons from H(2)O, generating O(2) and a proton gradient subsequently used for ATP formation. It consists of a core antenna complex that captures photons, and an electron transfer chain that converts photonic excitation into a charge separation. The D1/D2 (PsbA/PsbD) reaction center heterodimer binds P680, the primary electron donor of PSII as well as several subsequent electron acceptors. D2 is needed for assembly of a stable PSII complex.</text>
</comment>
<comment type="catalytic activity">
    <reaction evidence="1">
        <text>2 a plastoquinone + 4 hnu + 2 H2O = 2 a plastoquinol + O2</text>
        <dbReference type="Rhea" id="RHEA:36359"/>
        <dbReference type="Rhea" id="RHEA-COMP:9561"/>
        <dbReference type="Rhea" id="RHEA-COMP:9562"/>
        <dbReference type="ChEBI" id="CHEBI:15377"/>
        <dbReference type="ChEBI" id="CHEBI:15379"/>
        <dbReference type="ChEBI" id="CHEBI:17757"/>
        <dbReference type="ChEBI" id="CHEBI:30212"/>
        <dbReference type="ChEBI" id="CHEBI:62192"/>
        <dbReference type="EC" id="1.10.3.9"/>
    </reaction>
</comment>
<comment type="cofactor">
    <text evidence="1">The D1/D2 heterodimer binds P680, chlorophylls that are the primary electron donor of PSII, and subsequent electron acceptors. It shares a non-heme iron and each subunit binds pheophytin, quinone, additional chlorophylls, carotenoids and lipids. There is also a Cl(-1) ion associated with D1 and D2, which is required for oxygen evolution. The PSII complex binds additional chlorophylls, carotenoids and specific lipids.</text>
</comment>
<comment type="subunit">
    <text evidence="1">PSII is composed of 1 copy each of membrane proteins PsbA, PsbB, PsbC, PsbD, PsbE, PsbF, PsbH, PsbI, PsbJ, PsbK, PsbL, PsbM, PsbT, PsbX, PsbY, PsbZ, Psb30/Ycf12, peripheral proteins PsbO, CyanoQ (PsbQ), PsbU, PsbV and a large number of cofactors. It forms dimeric complexes.</text>
</comment>
<comment type="subcellular location">
    <subcellularLocation>
        <location evidence="1">Cellular thylakoid membrane</location>
        <topology evidence="1">Multi-pass membrane protein</topology>
    </subcellularLocation>
</comment>
<comment type="miscellaneous">
    <text evidence="1">2 of the reaction center chlorophylls (ChlD1 and ChlD2) are entirely coordinated by water.</text>
</comment>
<comment type="similarity">
    <text evidence="1">Belongs to the reaction center PufL/M/PsbA/D family.</text>
</comment>
<evidence type="ECO:0000255" key="1">
    <source>
        <dbReference type="HAMAP-Rule" id="MF_01383"/>
    </source>
</evidence>
<reference key="1">
    <citation type="journal article" date="2013" name="Plant Physiol.">
        <title>A Nostoc punctiforme Sugar Transporter Necessary to Establish a Cyanobacterium-Plant Symbiosis.</title>
        <authorList>
            <person name="Ekman M."/>
            <person name="Picossi S."/>
            <person name="Campbell E.L."/>
            <person name="Meeks J.C."/>
            <person name="Flores E."/>
        </authorList>
    </citation>
    <scope>NUCLEOTIDE SEQUENCE [LARGE SCALE GENOMIC DNA]</scope>
    <source>
        <strain>ATCC 29133 / PCC 73102</strain>
    </source>
</reference>
<dbReference type="EC" id="1.10.3.9" evidence="1"/>
<dbReference type="EMBL" id="CP001037">
    <property type="protein sequence ID" value="ACC82027.1"/>
    <property type="molecule type" value="Genomic_DNA"/>
</dbReference>
<dbReference type="EMBL" id="CP001037">
    <property type="protein sequence ID" value="ACC82914.1"/>
    <property type="molecule type" value="Genomic_DNA"/>
</dbReference>
<dbReference type="SMR" id="B2IVV1"/>
<dbReference type="STRING" id="63737.Npun_F4553"/>
<dbReference type="EnsemblBacteria" id="ACC82027">
    <property type="protein sequence ID" value="ACC82027"/>
    <property type="gene ID" value="Npun_R3637"/>
</dbReference>
<dbReference type="EnsemblBacteria" id="ACC82914">
    <property type="protein sequence ID" value="ACC82914"/>
    <property type="gene ID" value="Npun_F4553"/>
</dbReference>
<dbReference type="KEGG" id="npu:Npun_F4553"/>
<dbReference type="KEGG" id="npu:Npun_R3637"/>
<dbReference type="eggNOG" id="ENOG502Z8JK">
    <property type="taxonomic scope" value="Bacteria"/>
</dbReference>
<dbReference type="HOGENOM" id="CLU_077965_0_0_3"/>
<dbReference type="OrthoDB" id="505356at2"/>
<dbReference type="PhylomeDB" id="B2IVV1"/>
<dbReference type="Proteomes" id="UP000001191">
    <property type="component" value="Chromosome"/>
</dbReference>
<dbReference type="GO" id="GO:0009523">
    <property type="term" value="C:photosystem II"/>
    <property type="evidence" value="ECO:0007669"/>
    <property type="project" value="UniProtKB-KW"/>
</dbReference>
<dbReference type="GO" id="GO:0031676">
    <property type="term" value="C:plasma membrane-derived thylakoid membrane"/>
    <property type="evidence" value="ECO:0007669"/>
    <property type="project" value="UniProtKB-SubCell"/>
</dbReference>
<dbReference type="GO" id="GO:0016168">
    <property type="term" value="F:chlorophyll binding"/>
    <property type="evidence" value="ECO:0007669"/>
    <property type="project" value="UniProtKB-UniRule"/>
</dbReference>
<dbReference type="GO" id="GO:0045156">
    <property type="term" value="F:electron transporter, transferring electrons within the cyclic electron transport pathway of photosynthesis activity"/>
    <property type="evidence" value="ECO:0007669"/>
    <property type="project" value="InterPro"/>
</dbReference>
<dbReference type="GO" id="GO:0005506">
    <property type="term" value="F:iron ion binding"/>
    <property type="evidence" value="ECO:0007669"/>
    <property type="project" value="UniProtKB-UniRule"/>
</dbReference>
<dbReference type="GO" id="GO:0010242">
    <property type="term" value="F:oxygen evolving activity"/>
    <property type="evidence" value="ECO:0007669"/>
    <property type="project" value="UniProtKB-EC"/>
</dbReference>
<dbReference type="GO" id="GO:0009772">
    <property type="term" value="P:photosynthetic electron transport in photosystem II"/>
    <property type="evidence" value="ECO:0007669"/>
    <property type="project" value="InterPro"/>
</dbReference>
<dbReference type="CDD" id="cd09288">
    <property type="entry name" value="Photosystem-II_D2"/>
    <property type="match status" value="1"/>
</dbReference>
<dbReference type="FunFam" id="1.20.85.10:FF:000001">
    <property type="entry name" value="photosystem II D2 protein-like"/>
    <property type="match status" value="1"/>
</dbReference>
<dbReference type="Gene3D" id="1.20.85.10">
    <property type="entry name" value="Photosystem II protein D1-like"/>
    <property type="match status" value="1"/>
</dbReference>
<dbReference type="HAMAP" id="MF_01383">
    <property type="entry name" value="PSII_PsbD_D2"/>
    <property type="match status" value="1"/>
</dbReference>
<dbReference type="InterPro" id="IPR055266">
    <property type="entry name" value="D1/D2"/>
</dbReference>
<dbReference type="InterPro" id="IPR036854">
    <property type="entry name" value="Photo_II_D1/D2_sf"/>
</dbReference>
<dbReference type="InterPro" id="IPR000484">
    <property type="entry name" value="Photo_RC_L/M"/>
</dbReference>
<dbReference type="InterPro" id="IPR055265">
    <property type="entry name" value="Photo_RC_L/M_CS"/>
</dbReference>
<dbReference type="InterPro" id="IPR005868">
    <property type="entry name" value="PSII_PsbD/D2"/>
</dbReference>
<dbReference type="NCBIfam" id="TIGR01152">
    <property type="entry name" value="psbD"/>
    <property type="match status" value="1"/>
</dbReference>
<dbReference type="PANTHER" id="PTHR33149:SF12">
    <property type="entry name" value="PHOTOSYSTEM II D2 PROTEIN"/>
    <property type="match status" value="1"/>
</dbReference>
<dbReference type="PANTHER" id="PTHR33149">
    <property type="entry name" value="PHOTOSYSTEM II PROTEIN D1"/>
    <property type="match status" value="1"/>
</dbReference>
<dbReference type="Pfam" id="PF00124">
    <property type="entry name" value="Photo_RC"/>
    <property type="match status" value="1"/>
</dbReference>
<dbReference type="PRINTS" id="PR00256">
    <property type="entry name" value="REACTNCENTRE"/>
</dbReference>
<dbReference type="SUPFAM" id="SSF81483">
    <property type="entry name" value="Bacterial photosystem II reaction centre, L and M subunits"/>
    <property type="match status" value="1"/>
</dbReference>
<dbReference type="PROSITE" id="PS00244">
    <property type="entry name" value="REACTION_CENTER"/>
    <property type="match status" value="1"/>
</dbReference>
<keyword id="KW-0148">Chlorophyll</keyword>
<keyword id="KW-0157">Chromophore</keyword>
<keyword id="KW-0249">Electron transport</keyword>
<keyword id="KW-0408">Iron</keyword>
<keyword id="KW-0460">Magnesium</keyword>
<keyword id="KW-0472">Membrane</keyword>
<keyword id="KW-0479">Metal-binding</keyword>
<keyword id="KW-0560">Oxidoreductase</keyword>
<keyword id="KW-0602">Photosynthesis</keyword>
<keyword id="KW-0604">Photosystem II</keyword>
<keyword id="KW-1185">Reference proteome</keyword>
<keyword id="KW-0793">Thylakoid</keyword>
<keyword id="KW-0812">Transmembrane</keyword>
<keyword id="KW-1133">Transmembrane helix</keyword>
<keyword id="KW-0813">Transport</keyword>